<feature type="chain" id="PRO_1000008150" description="Thiamine-phosphate synthase">
    <location>
        <begin position="1"/>
        <end position="207"/>
    </location>
</feature>
<feature type="binding site" evidence="1">
    <location>
        <begin position="36"/>
        <end position="40"/>
    </location>
    <ligand>
        <name>4-amino-2-methyl-5-(diphosphooxymethyl)pyrimidine</name>
        <dbReference type="ChEBI" id="CHEBI:57841"/>
    </ligand>
</feature>
<feature type="binding site" evidence="1">
    <location>
        <position position="68"/>
    </location>
    <ligand>
        <name>4-amino-2-methyl-5-(diphosphooxymethyl)pyrimidine</name>
        <dbReference type="ChEBI" id="CHEBI:57841"/>
    </ligand>
</feature>
<feature type="binding site" evidence="1">
    <location>
        <position position="69"/>
    </location>
    <ligand>
        <name>Mg(2+)</name>
        <dbReference type="ChEBI" id="CHEBI:18420"/>
    </ligand>
</feature>
<feature type="binding site" evidence="1">
    <location>
        <position position="88"/>
    </location>
    <ligand>
        <name>Mg(2+)</name>
        <dbReference type="ChEBI" id="CHEBI:18420"/>
    </ligand>
</feature>
<feature type="binding site" evidence="1">
    <location>
        <position position="106"/>
    </location>
    <ligand>
        <name>4-amino-2-methyl-5-(diphosphooxymethyl)pyrimidine</name>
        <dbReference type="ChEBI" id="CHEBI:57841"/>
    </ligand>
</feature>
<feature type="binding site" evidence="1">
    <location>
        <begin position="132"/>
        <end position="134"/>
    </location>
    <ligand>
        <name>2-[(2R,5Z)-2-carboxy-4-methylthiazol-5(2H)-ylidene]ethyl phosphate</name>
        <dbReference type="ChEBI" id="CHEBI:62899"/>
    </ligand>
</feature>
<feature type="binding site" evidence="1">
    <location>
        <position position="135"/>
    </location>
    <ligand>
        <name>4-amino-2-methyl-5-(diphosphooxymethyl)pyrimidine</name>
        <dbReference type="ChEBI" id="CHEBI:57841"/>
    </ligand>
</feature>
<feature type="binding site" evidence="1">
    <location>
        <position position="162"/>
    </location>
    <ligand>
        <name>2-[(2R,5Z)-2-carboxy-4-methylthiazol-5(2H)-ylidene]ethyl phosphate</name>
        <dbReference type="ChEBI" id="CHEBI:62899"/>
    </ligand>
</feature>
<feature type="binding site" evidence="1">
    <location>
        <begin position="182"/>
        <end position="183"/>
    </location>
    <ligand>
        <name>2-[(2R,5Z)-2-carboxy-4-methylthiazol-5(2H)-ylidene]ethyl phosphate</name>
        <dbReference type="ChEBI" id="CHEBI:62899"/>
    </ligand>
</feature>
<keyword id="KW-0460">Magnesium</keyword>
<keyword id="KW-0479">Metal-binding</keyword>
<keyword id="KW-0784">Thiamine biosynthesis</keyword>
<keyword id="KW-0808">Transferase</keyword>
<name>THIE_METM5</name>
<gene>
    <name evidence="1" type="primary">thiE</name>
    <name type="ordered locus">MmarC5_0446</name>
</gene>
<reference key="1">
    <citation type="submission" date="2007-03" db="EMBL/GenBank/DDBJ databases">
        <title>Complete sequence of chromosome of Methanococcus maripaludis C5.</title>
        <authorList>
            <consortium name="US DOE Joint Genome Institute"/>
            <person name="Copeland A."/>
            <person name="Lucas S."/>
            <person name="Lapidus A."/>
            <person name="Barry K."/>
            <person name="Glavina del Rio T."/>
            <person name="Dalin E."/>
            <person name="Tice H."/>
            <person name="Pitluck S."/>
            <person name="Chertkov O."/>
            <person name="Brettin T."/>
            <person name="Bruce D."/>
            <person name="Han C."/>
            <person name="Detter J.C."/>
            <person name="Schmutz J."/>
            <person name="Larimer F."/>
            <person name="Land M."/>
            <person name="Hauser L."/>
            <person name="Kyrpides N."/>
            <person name="Mikhailova N."/>
            <person name="Sieprawska-Lupa M."/>
            <person name="Whitman W.B."/>
            <person name="Richardson P."/>
        </authorList>
    </citation>
    <scope>NUCLEOTIDE SEQUENCE [LARGE SCALE GENOMIC DNA]</scope>
    <source>
        <strain>C5 / ATCC BAA-1333</strain>
    </source>
</reference>
<organism>
    <name type="scientific">Methanococcus maripaludis (strain C5 / ATCC BAA-1333)</name>
    <dbReference type="NCBI Taxonomy" id="402880"/>
    <lineage>
        <taxon>Archaea</taxon>
        <taxon>Methanobacteriati</taxon>
        <taxon>Methanobacteriota</taxon>
        <taxon>Methanomada group</taxon>
        <taxon>Methanococci</taxon>
        <taxon>Methanococcales</taxon>
        <taxon>Methanococcaceae</taxon>
        <taxon>Methanococcus</taxon>
    </lineage>
</organism>
<protein>
    <recommendedName>
        <fullName evidence="1">Thiamine-phosphate synthase</fullName>
        <shortName evidence="1">TP synthase</shortName>
        <shortName evidence="1">TPS</shortName>
        <ecNumber evidence="1">2.5.1.3</ecNumber>
    </recommendedName>
    <alternativeName>
        <fullName evidence="1">Thiamine-phosphate pyrophosphorylase</fullName>
        <shortName evidence="1">TMP pyrophosphorylase</shortName>
        <shortName evidence="1">TMP-PPase</shortName>
    </alternativeName>
</protein>
<sequence length="207" mass="22375">MKFKDKLKFYVITDSNYSDEVSSVEKALKGGASSIQLRMKTSSTRKMIEVGNKLRTLTSEYDALFFVNDRLDVAQAVNADGIHVGIDDMPVSKIKEIAPNLIIGASAYNIDEMKTAEYEGADYLGVGAVYSTNTKLDARNLGLDGLKDISKIANLPIVAIGGINHSNVENVLECGVSGVAVVSAIVGAENILKSAENMHELIKKYIK</sequence>
<evidence type="ECO:0000255" key="1">
    <source>
        <dbReference type="HAMAP-Rule" id="MF_00097"/>
    </source>
</evidence>
<dbReference type="EC" id="2.5.1.3" evidence="1"/>
<dbReference type="EMBL" id="CP000609">
    <property type="protein sequence ID" value="ABO34761.1"/>
    <property type="molecule type" value="Genomic_DNA"/>
</dbReference>
<dbReference type="RefSeq" id="WP_011868216.1">
    <property type="nucleotide sequence ID" value="NC_009135.1"/>
</dbReference>
<dbReference type="SMR" id="A4FX32"/>
<dbReference type="STRING" id="402880.MmarC5_0446"/>
<dbReference type="GeneID" id="4928433"/>
<dbReference type="KEGG" id="mmq:MmarC5_0446"/>
<dbReference type="eggNOG" id="arCOG01089">
    <property type="taxonomic scope" value="Archaea"/>
</dbReference>
<dbReference type="HOGENOM" id="CLU_018272_3_2_2"/>
<dbReference type="OrthoDB" id="85572at2157"/>
<dbReference type="UniPathway" id="UPA00060">
    <property type="reaction ID" value="UER00141"/>
</dbReference>
<dbReference type="Proteomes" id="UP000000253">
    <property type="component" value="Chromosome"/>
</dbReference>
<dbReference type="GO" id="GO:0005737">
    <property type="term" value="C:cytoplasm"/>
    <property type="evidence" value="ECO:0007669"/>
    <property type="project" value="TreeGrafter"/>
</dbReference>
<dbReference type="GO" id="GO:0000287">
    <property type="term" value="F:magnesium ion binding"/>
    <property type="evidence" value="ECO:0007669"/>
    <property type="project" value="UniProtKB-UniRule"/>
</dbReference>
<dbReference type="GO" id="GO:0004789">
    <property type="term" value="F:thiamine-phosphate diphosphorylase activity"/>
    <property type="evidence" value="ECO:0007669"/>
    <property type="project" value="UniProtKB-UniRule"/>
</dbReference>
<dbReference type="GO" id="GO:0009228">
    <property type="term" value="P:thiamine biosynthetic process"/>
    <property type="evidence" value="ECO:0007669"/>
    <property type="project" value="UniProtKB-KW"/>
</dbReference>
<dbReference type="GO" id="GO:0009229">
    <property type="term" value="P:thiamine diphosphate biosynthetic process"/>
    <property type="evidence" value="ECO:0007669"/>
    <property type="project" value="UniProtKB-UniRule"/>
</dbReference>
<dbReference type="CDD" id="cd00564">
    <property type="entry name" value="TMP_TenI"/>
    <property type="match status" value="1"/>
</dbReference>
<dbReference type="FunFam" id="3.20.20.70:FF:000096">
    <property type="entry name" value="Thiamine-phosphate synthase"/>
    <property type="match status" value="1"/>
</dbReference>
<dbReference type="Gene3D" id="3.20.20.70">
    <property type="entry name" value="Aldolase class I"/>
    <property type="match status" value="1"/>
</dbReference>
<dbReference type="HAMAP" id="MF_00097">
    <property type="entry name" value="TMP_synthase"/>
    <property type="match status" value="1"/>
</dbReference>
<dbReference type="InterPro" id="IPR013785">
    <property type="entry name" value="Aldolase_TIM"/>
</dbReference>
<dbReference type="InterPro" id="IPR036206">
    <property type="entry name" value="ThiamineP_synth_sf"/>
</dbReference>
<dbReference type="InterPro" id="IPR022998">
    <property type="entry name" value="ThiamineP_synth_TenI"/>
</dbReference>
<dbReference type="InterPro" id="IPR034291">
    <property type="entry name" value="TMP_synthase"/>
</dbReference>
<dbReference type="NCBIfam" id="TIGR00693">
    <property type="entry name" value="thiE"/>
    <property type="match status" value="1"/>
</dbReference>
<dbReference type="PANTHER" id="PTHR20857:SF23">
    <property type="entry name" value="THIAMINE BIOSYNTHETIC BIFUNCTIONAL ENZYME"/>
    <property type="match status" value="1"/>
</dbReference>
<dbReference type="PANTHER" id="PTHR20857">
    <property type="entry name" value="THIAMINE-PHOSPHATE PYROPHOSPHORYLASE"/>
    <property type="match status" value="1"/>
</dbReference>
<dbReference type="Pfam" id="PF02581">
    <property type="entry name" value="TMP-TENI"/>
    <property type="match status" value="1"/>
</dbReference>
<dbReference type="SUPFAM" id="SSF51391">
    <property type="entry name" value="Thiamin phosphate synthase"/>
    <property type="match status" value="1"/>
</dbReference>
<comment type="function">
    <text evidence="1">Condenses 4-methyl-5-(beta-hydroxyethyl)thiazole monophosphate (THZ-P) and 2-methyl-4-amino-5-hydroxymethyl pyrimidine pyrophosphate (HMP-PP) to form thiamine monophosphate (TMP).</text>
</comment>
<comment type="catalytic activity">
    <reaction evidence="1">
        <text>2-[(2R,5Z)-2-carboxy-4-methylthiazol-5(2H)-ylidene]ethyl phosphate + 4-amino-2-methyl-5-(diphosphooxymethyl)pyrimidine + 2 H(+) = thiamine phosphate + CO2 + diphosphate</text>
        <dbReference type="Rhea" id="RHEA:47844"/>
        <dbReference type="ChEBI" id="CHEBI:15378"/>
        <dbReference type="ChEBI" id="CHEBI:16526"/>
        <dbReference type="ChEBI" id="CHEBI:33019"/>
        <dbReference type="ChEBI" id="CHEBI:37575"/>
        <dbReference type="ChEBI" id="CHEBI:57841"/>
        <dbReference type="ChEBI" id="CHEBI:62899"/>
        <dbReference type="EC" id="2.5.1.3"/>
    </reaction>
</comment>
<comment type="catalytic activity">
    <reaction evidence="1">
        <text>2-(2-carboxy-4-methylthiazol-5-yl)ethyl phosphate + 4-amino-2-methyl-5-(diphosphooxymethyl)pyrimidine + 2 H(+) = thiamine phosphate + CO2 + diphosphate</text>
        <dbReference type="Rhea" id="RHEA:47848"/>
        <dbReference type="ChEBI" id="CHEBI:15378"/>
        <dbReference type="ChEBI" id="CHEBI:16526"/>
        <dbReference type="ChEBI" id="CHEBI:33019"/>
        <dbReference type="ChEBI" id="CHEBI:37575"/>
        <dbReference type="ChEBI" id="CHEBI:57841"/>
        <dbReference type="ChEBI" id="CHEBI:62890"/>
        <dbReference type="EC" id="2.5.1.3"/>
    </reaction>
</comment>
<comment type="catalytic activity">
    <reaction evidence="1">
        <text>4-methyl-5-(2-phosphooxyethyl)-thiazole + 4-amino-2-methyl-5-(diphosphooxymethyl)pyrimidine + H(+) = thiamine phosphate + diphosphate</text>
        <dbReference type="Rhea" id="RHEA:22328"/>
        <dbReference type="ChEBI" id="CHEBI:15378"/>
        <dbReference type="ChEBI" id="CHEBI:33019"/>
        <dbReference type="ChEBI" id="CHEBI:37575"/>
        <dbReference type="ChEBI" id="CHEBI:57841"/>
        <dbReference type="ChEBI" id="CHEBI:58296"/>
        <dbReference type="EC" id="2.5.1.3"/>
    </reaction>
</comment>
<comment type="cofactor">
    <cofactor evidence="1">
        <name>Mg(2+)</name>
        <dbReference type="ChEBI" id="CHEBI:18420"/>
    </cofactor>
    <text evidence="1">Binds 1 Mg(2+) ion per subunit.</text>
</comment>
<comment type="pathway">
    <text evidence="1">Cofactor biosynthesis; thiamine diphosphate biosynthesis; thiamine phosphate from 4-amino-2-methyl-5-diphosphomethylpyrimidine and 4-methyl-5-(2-phosphoethyl)-thiazole: step 1/1.</text>
</comment>
<comment type="similarity">
    <text evidence="1">Belongs to the thiamine-phosphate synthase family.</text>
</comment>
<proteinExistence type="inferred from homology"/>
<accession>A4FX32</accession>